<organism>
    <name type="scientific">Pyrococcus horikoshii (strain ATCC 700860 / DSM 12428 / JCM 9974 / NBRC 100139 / OT-3)</name>
    <dbReference type="NCBI Taxonomy" id="70601"/>
    <lineage>
        <taxon>Archaea</taxon>
        <taxon>Methanobacteriati</taxon>
        <taxon>Methanobacteriota</taxon>
        <taxon>Thermococci</taxon>
        <taxon>Thermococcales</taxon>
        <taxon>Thermococcaceae</taxon>
        <taxon>Pyrococcus</taxon>
    </lineage>
</organism>
<feature type="chain" id="PRO_0000460394" description="Transcription termination factor FttA">
    <location>
        <begin position="1"/>
        <end position="651"/>
    </location>
</feature>
<feature type="region of interest" description="Archaeal CPSF-KH domain" evidence="4">
    <location>
        <begin position="1"/>
        <end position="200"/>
    </location>
</feature>
<feature type="region of interest" description="KHa" evidence="1 5">
    <location>
        <begin position="12"/>
        <end position="79"/>
    </location>
</feature>
<feature type="region of interest" description="KHb" evidence="1 5">
    <location>
        <begin position="80"/>
        <end position="147"/>
    </location>
</feature>
<feature type="region of interest" description="Metallo-beta-lactamase N-terminus" evidence="1">
    <location>
        <begin position="188"/>
        <end position="398"/>
    </location>
</feature>
<feature type="region of interest" description="Beta-Casp" evidence="1">
    <location>
        <begin position="399"/>
        <end position="592"/>
    </location>
</feature>
<feature type="region of interest" description="Metallo-beta-lactamase C-terminus" evidence="1">
    <location>
        <begin position="593"/>
        <end position="651"/>
    </location>
</feature>
<feature type="binding site" evidence="1 2 7 8">
    <location>
        <position position="256"/>
    </location>
    <ligand>
        <name>Zn(2+)</name>
        <dbReference type="ChEBI" id="CHEBI:29105"/>
        <label>1</label>
    </ligand>
</feature>
<feature type="binding site" evidence="1 2 7 8">
    <location>
        <position position="258"/>
    </location>
    <ligand>
        <name>Zn(2+)</name>
        <dbReference type="ChEBI" id="CHEBI:29105"/>
        <label>1</label>
    </ligand>
</feature>
<feature type="binding site" evidence="1 2 7 8">
    <location>
        <position position="260"/>
    </location>
    <ligand>
        <name>Zn(2+)</name>
        <dbReference type="ChEBI" id="CHEBI:29105"/>
        <label>2</label>
    </ligand>
</feature>
<feature type="binding site" evidence="1 2 7 8">
    <location>
        <position position="261"/>
    </location>
    <ligand>
        <name>Zn(2+)</name>
        <dbReference type="ChEBI" id="CHEBI:29105"/>
        <label>2</label>
    </ligand>
</feature>
<feature type="binding site" evidence="1 2 7 8">
    <location>
        <position position="344"/>
    </location>
    <ligand>
        <name>Zn(2+)</name>
        <dbReference type="ChEBI" id="CHEBI:29105"/>
        <label>1</label>
    </ligand>
</feature>
<feature type="binding site" evidence="1 2 7 8">
    <location>
        <position position="367"/>
    </location>
    <ligand>
        <name>Zn(2+)</name>
        <dbReference type="ChEBI" id="CHEBI:29105"/>
        <label>1</label>
    </ligand>
</feature>
<feature type="binding site" evidence="1 2 7 8">
    <location>
        <position position="367"/>
    </location>
    <ligand>
        <name>Zn(2+)</name>
        <dbReference type="ChEBI" id="CHEBI:29105"/>
        <label>2</label>
    </ligand>
</feature>
<feature type="binding site" evidence="1 2 7 8">
    <location>
        <position position="618"/>
    </location>
    <ligand>
        <name>Zn(2+)</name>
        <dbReference type="ChEBI" id="CHEBI:29105"/>
        <label>2</label>
    </ligand>
</feature>
<feature type="helix" evidence="9">
    <location>
        <begin position="11"/>
        <end position="22"/>
    </location>
</feature>
<feature type="turn" evidence="9">
    <location>
        <begin position="23"/>
        <end position="25"/>
    </location>
</feature>
<feature type="helix" evidence="10">
    <location>
        <begin position="28"/>
        <end position="30"/>
    </location>
</feature>
<feature type="strand" evidence="9">
    <location>
        <begin position="32"/>
        <end position="37"/>
    </location>
</feature>
<feature type="strand" evidence="9">
    <location>
        <begin position="39"/>
        <end position="48"/>
    </location>
</feature>
<feature type="helix" evidence="9">
    <location>
        <begin position="59"/>
        <end position="66"/>
    </location>
</feature>
<feature type="strand" evidence="9">
    <location>
        <begin position="70"/>
        <end position="73"/>
    </location>
</feature>
<feature type="helix" evidence="9">
    <location>
        <begin position="76"/>
        <end position="78"/>
    </location>
</feature>
<feature type="helix" evidence="9">
    <location>
        <begin position="82"/>
        <end position="92"/>
    </location>
</feature>
<feature type="helix" evidence="9">
    <location>
        <begin position="95"/>
        <end position="97"/>
    </location>
</feature>
<feature type="strand" evidence="9">
    <location>
        <begin position="101"/>
        <end position="104"/>
    </location>
</feature>
<feature type="turn" evidence="9">
    <location>
        <begin position="106"/>
        <end position="108"/>
    </location>
</feature>
<feature type="strand" evidence="9">
    <location>
        <begin position="110"/>
        <end position="117"/>
    </location>
</feature>
<feature type="turn" evidence="9">
    <location>
        <begin position="118"/>
        <end position="121"/>
    </location>
</feature>
<feature type="helix" evidence="9">
    <location>
        <begin position="127"/>
        <end position="136"/>
    </location>
</feature>
<feature type="strand" evidence="9">
    <location>
        <begin position="138"/>
        <end position="144"/>
    </location>
</feature>
<feature type="helix" evidence="9">
    <location>
        <begin position="151"/>
        <end position="162"/>
    </location>
</feature>
<feature type="helix" evidence="9">
    <location>
        <begin position="164"/>
        <end position="178"/>
    </location>
</feature>
<feature type="strand" evidence="9">
    <location>
        <begin position="180"/>
        <end position="182"/>
    </location>
</feature>
<feature type="strand" evidence="9">
    <location>
        <begin position="189"/>
        <end position="195"/>
    </location>
</feature>
<feature type="strand" evidence="9">
    <location>
        <begin position="197"/>
        <end position="201"/>
    </location>
</feature>
<feature type="strand" evidence="9">
    <location>
        <begin position="204"/>
        <end position="211"/>
    </location>
</feature>
<feature type="strand" evidence="9">
    <location>
        <begin position="213"/>
        <end position="216"/>
    </location>
</feature>
<feature type="helix" evidence="9">
    <location>
        <begin position="222"/>
        <end position="224"/>
    </location>
</feature>
<feature type="helix" evidence="9">
    <location>
        <begin position="228"/>
        <end position="231"/>
    </location>
</feature>
<feature type="helix" evidence="9">
    <location>
        <begin position="238"/>
        <end position="245"/>
    </location>
</feature>
<feature type="strand" evidence="9">
    <location>
        <begin position="251"/>
        <end position="253"/>
    </location>
</feature>
<feature type="helix" evidence="9">
    <location>
        <begin position="259"/>
        <end position="262"/>
    </location>
</feature>
<feature type="helix" evidence="9">
    <location>
        <begin position="265"/>
        <end position="270"/>
    </location>
</feature>
<feature type="strand" evidence="9">
    <location>
        <begin position="278"/>
        <end position="280"/>
    </location>
</feature>
<feature type="helix" evidence="9">
    <location>
        <begin position="282"/>
        <end position="301"/>
    </location>
</feature>
<feature type="helix" evidence="9">
    <location>
        <begin position="310"/>
        <end position="318"/>
    </location>
</feature>
<feature type="strand" evidence="9">
    <location>
        <begin position="320"/>
        <end position="322"/>
    </location>
</feature>
<feature type="strand" evidence="9">
    <location>
        <begin position="329"/>
        <end position="332"/>
    </location>
</feature>
<feature type="strand" evidence="9">
    <location>
        <begin position="335"/>
        <end position="341"/>
    </location>
</feature>
<feature type="strand" evidence="9">
    <location>
        <begin position="343"/>
        <end position="345"/>
    </location>
</feature>
<feature type="strand" evidence="9">
    <location>
        <begin position="349"/>
        <end position="355"/>
    </location>
</feature>
<feature type="turn" evidence="9">
    <location>
        <begin position="356"/>
        <end position="360"/>
    </location>
</feature>
<feature type="strand" evidence="9">
    <location>
        <begin position="362"/>
        <end position="364"/>
    </location>
</feature>
<feature type="strand" evidence="9">
    <location>
        <begin position="387"/>
        <end position="392"/>
    </location>
</feature>
<feature type="helix" evidence="9">
    <location>
        <begin position="405"/>
        <end position="421"/>
    </location>
</feature>
<feature type="strand" evidence="9">
    <location>
        <begin position="425"/>
        <end position="429"/>
    </location>
</feature>
<feature type="turn" evidence="9">
    <location>
        <begin position="432"/>
        <end position="434"/>
    </location>
</feature>
<feature type="helix" evidence="9">
    <location>
        <begin position="435"/>
        <end position="447"/>
    </location>
</feature>
<feature type="turn" evidence="9">
    <location>
        <begin position="448"/>
        <end position="450"/>
    </location>
</feature>
<feature type="strand" evidence="9">
    <location>
        <begin position="456"/>
        <end position="461"/>
    </location>
</feature>
<feature type="helix" evidence="9">
    <location>
        <begin position="462"/>
        <end position="470"/>
    </location>
</feature>
<feature type="helix" evidence="9">
    <location>
        <begin position="473"/>
        <end position="475"/>
    </location>
</feature>
<feature type="helix" evidence="9">
    <location>
        <begin position="478"/>
        <end position="483"/>
    </location>
</feature>
<feature type="turn" evidence="9">
    <location>
        <begin position="484"/>
        <end position="486"/>
    </location>
</feature>
<feature type="turn" evidence="10">
    <location>
        <begin position="491"/>
        <end position="493"/>
    </location>
</feature>
<feature type="strand" evidence="9">
    <location>
        <begin position="497"/>
        <end position="499"/>
    </location>
</feature>
<feature type="helix" evidence="9">
    <location>
        <begin position="503"/>
        <end position="511"/>
    </location>
</feature>
<feature type="strand" evidence="9">
    <location>
        <begin position="516"/>
        <end position="521"/>
    </location>
</feature>
<feature type="strand" evidence="9">
    <location>
        <begin position="525"/>
        <end position="528"/>
    </location>
</feature>
<feature type="helix" evidence="9">
    <location>
        <begin position="529"/>
        <end position="537"/>
    </location>
</feature>
<feature type="strand" evidence="9">
    <location>
        <begin position="544"/>
        <end position="547"/>
    </location>
</feature>
<feature type="helix" evidence="9">
    <location>
        <begin position="556"/>
        <end position="562"/>
    </location>
</feature>
<feature type="strand" evidence="9">
    <location>
        <begin position="565"/>
        <end position="570"/>
    </location>
</feature>
<feature type="helix" evidence="9">
    <location>
        <begin position="572"/>
        <end position="574"/>
    </location>
</feature>
<feature type="strand" evidence="9">
    <location>
        <begin position="576"/>
        <end position="580"/>
    </location>
</feature>
<feature type="strand" evidence="9">
    <location>
        <begin position="583"/>
        <end position="587"/>
    </location>
</feature>
<feature type="helix" evidence="9">
    <location>
        <begin position="589"/>
        <end position="591"/>
    </location>
</feature>
<feature type="helix" evidence="9">
    <location>
        <begin position="597"/>
        <end position="606"/>
    </location>
</feature>
<feature type="strand" evidence="9">
    <location>
        <begin position="612"/>
        <end position="619"/>
    </location>
</feature>
<feature type="helix" evidence="9">
    <location>
        <begin position="621"/>
        <end position="635"/>
    </location>
</feature>
<feature type="strand" evidence="9">
    <location>
        <begin position="638"/>
        <end position="640"/>
    </location>
</feature>
<feature type="strand" evidence="9">
    <location>
        <begin position="647"/>
        <end position="649"/>
    </location>
</feature>
<protein>
    <recommendedName>
        <fullName evidence="1">Transcription termination factor FttA</fullName>
        <ecNumber evidence="1">3.1.-.-</ecNumber>
    </recommendedName>
    <alternativeName>
        <fullName evidence="3">Archaeal CPSF</fullName>
    </alternativeName>
</protein>
<proteinExistence type="evidence at protein level"/>
<comment type="function">
    <text evidence="1">Terminates transcription on the whole genome. Termination is linked to FttA-mediated RNA cleavage and does not require NTP hydrolysis. Cleaves endonucleolytically at the RNA exit channel of RNA polymerase (RNAP); the 5'-3' exonuclease activity of this protein degrades the nascent RNA released from RNAP.</text>
</comment>
<comment type="function">
    <text evidence="5">Has nuclease activity on single-stranded RNA (PubMed:20544974).</text>
</comment>
<comment type="cofactor">
    <cofactor evidence="1 2">
        <name>Zn(2+)</name>
        <dbReference type="ChEBI" id="CHEBI:29105"/>
    </cofactor>
    <text evidence="1 2 7 8">Binds 2 Zn(2+) ions, which are required for nuclease activity (PubMed:20544974).</text>
</comment>
<comment type="subunit">
    <text evidence="1">Homodimer. Interacts with RNA polymerase (RNAP), interacts with the Spt4-Spt5 complex.</text>
</comment>
<comment type="similarity">
    <text evidence="1">Belongs to the metallo-beta-lactamase superfamily. RNA-metabolizing metallo-beta-lactamase-like family. FttA subfamily.</text>
</comment>
<reference evidence="6" key="1">
    <citation type="journal article" date="1998" name="DNA Res.">
        <title>Complete sequence and gene organization of the genome of a hyper-thermophilic archaebacterium, Pyrococcus horikoshii OT3.</title>
        <authorList>
            <person name="Kawarabayasi Y."/>
            <person name="Sawada M."/>
            <person name="Horikawa H."/>
            <person name="Haikawa Y."/>
            <person name="Hino Y."/>
            <person name="Yamamoto S."/>
            <person name="Sekine M."/>
            <person name="Baba S."/>
            <person name="Kosugi H."/>
            <person name="Hosoyama A."/>
            <person name="Nagai Y."/>
            <person name="Sakai M."/>
            <person name="Ogura K."/>
            <person name="Otsuka R."/>
            <person name="Nakazawa H."/>
            <person name="Takamiya M."/>
            <person name="Ohfuku Y."/>
            <person name="Funahashi T."/>
            <person name="Tanaka T."/>
            <person name="Kudoh Y."/>
            <person name="Yamazaki J."/>
            <person name="Kushida N."/>
            <person name="Oguchi A."/>
            <person name="Aoki K."/>
            <person name="Yoshizawa T."/>
            <person name="Nakamura Y."/>
            <person name="Robb F.T."/>
            <person name="Horikoshi K."/>
            <person name="Masuchi Y."/>
            <person name="Shizuya H."/>
            <person name="Kikuchi H."/>
        </authorList>
    </citation>
    <scope>NUCLEOTIDE SEQUENCE [LARGE SCALE GENOMIC DNA]</scope>
    <source>
        <strain>ATCC 700860 / DSM 12428 / JCM 9974 / NBRC 100139 / OT-3</strain>
    </source>
</reference>
<reference evidence="7 8" key="2">
    <citation type="journal article" date="2010" name="Proteins">
        <title>Crystal structure of an archaeal cleavage and polyadenylation specificity factor subunit from Pyrococcus horikoshii.</title>
        <authorList>
            <person name="Nishida Y."/>
            <person name="Ishikawa H."/>
            <person name="Baba S."/>
            <person name="Nakagawa N."/>
            <person name="Kuramitsu S."/>
            <person name="Masui R."/>
        </authorList>
    </citation>
    <scope>X-RAY CRYSTALLOGRAPHY (2.60 ANGSTROMS) IN COMPLEX WITH ZINC WITH AND WITHOUT RNA ANALOG</scope>
    <scope>FUNCTION</scope>
    <scope>COFACTOR</scope>
    <scope>DOMAIN</scope>
    <source>
        <strain>ATCC 700860 / DSM 12428 / JCM 9974 / NBRC 100139 / OT-3</strain>
    </source>
</reference>
<name>FTTA_PYRHO</name>
<evidence type="ECO:0000255" key="1">
    <source>
        <dbReference type="HAMAP-Rule" id="MF_00870"/>
    </source>
</evidence>
<evidence type="ECO:0000269" key="2">
    <source>
    </source>
</evidence>
<evidence type="ECO:0000303" key="3">
    <source>
    </source>
</evidence>
<evidence type="ECO:0000305" key="4"/>
<evidence type="ECO:0000305" key="5">
    <source>
    </source>
</evidence>
<evidence type="ECO:0000312" key="6">
    <source>
        <dbReference type="EMBL" id="BAA30510.1"/>
    </source>
</evidence>
<evidence type="ECO:0007744" key="7">
    <source>
        <dbReference type="PDB" id="3AF5"/>
    </source>
</evidence>
<evidence type="ECO:0007744" key="8">
    <source>
        <dbReference type="PDB" id="3AF6"/>
    </source>
</evidence>
<evidence type="ECO:0007829" key="9">
    <source>
        <dbReference type="PDB" id="3AF5"/>
    </source>
</evidence>
<evidence type="ECO:0007829" key="10">
    <source>
        <dbReference type="PDB" id="3AF6"/>
    </source>
</evidence>
<dbReference type="EC" id="3.1.-.-" evidence="1"/>
<dbReference type="EMBL" id="BA000001">
    <property type="protein sequence ID" value="BAA30510.1"/>
    <property type="molecule type" value="Genomic_DNA"/>
</dbReference>
<dbReference type="PIR" id="F71013">
    <property type="entry name" value="F71013"/>
</dbReference>
<dbReference type="PDB" id="3AF5">
    <property type="method" value="X-ray"/>
    <property type="resolution" value="2.60 A"/>
    <property type="chains" value="A=1-651"/>
</dbReference>
<dbReference type="PDB" id="3AF6">
    <property type="method" value="X-ray"/>
    <property type="resolution" value="2.60 A"/>
    <property type="chains" value="A=1-651"/>
</dbReference>
<dbReference type="PDBsum" id="3AF5"/>
<dbReference type="PDBsum" id="3AF6"/>
<dbReference type="SMR" id="O50112"/>
<dbReference type="STRING" id="70601.gene:9378380"/>
<dbReference type="EnsemblBacteria" id="BAA30510">
    <property type="protein sequence ID" value="BAA30510"/>
    <property type="gene ID" value="BAA30510"/>
</dbReference>
<dbReference type="KEGG" id="pho:PH1404"/>
<dbReference type="eggNOG" id="arCOG00543">
    <property type="taxonomic scope" value="Archaea"/>
</dbReference>
<dbReference type="EvolutionaryTrace" id="O50112"/>
<dbReference type="Proteomes" id="UP000000752">
    <property type="component" value="Chromosome"/>
</dbReference>
<dbReference type="GO" id="GO:0003677">
    <property type="term" value="F:DNA binding"/>
    <property type="evidence" value="ECO:0007669"/>
    <property type="project" value="UniProtKB-KW"/>
</dbReference>
<dbReference type="GO" id="GO:0004527">
    <property type="term" value="F:exonuclease activity"/>
    <property type="evidence" value="ECO:0007669"/>
    <property type="project" value="UniProtKB-KW"/>
</dbReference>
<dbReference type="GO" id="GO:0003723">
    <property type="term" value="F:RNA binding"/>
    <property type="evidence" value="ECO:0007669"/>
    <property type="project" value="UniProtKB-KW"/>
</dbReference>
<dbReference type="GO" id="GO:0004521">
    <property type="term" value="F:RNA endonuclease activity"/>
    <property type="evidence" value="ECO:0007669"/>
    <property type="project" value="TreeGrafter"/>
</dbReference>
<dbReference type="GO" id="GO:0008270">
    <property type="term" value="F:zinc ion binding"/>
    <property type="evidence" value="ECO:0000314"/>
    <property type="project" value="UniProtKB"/>
</dbReference>
<dbReference type="GO" id="GO:0006353">
    <property type="term" value="P:DNA-templated transcription termination"/>
    <property type="evidence" value="ECO:0007669"/>
    <property type="project" value="UniProtKB-KW"/>
</dbReference>
<dbReference type="CDD" id="cd07734">
    <property type="entry name" value="Int9-11_CPSF2-3-like_MBL-fold"/>
    <property type="match status" value="1"/>
</dbReference>
<dbReference type="CDD" id="cd22532">
    <property type="entry name" value="KH-II_CPSF_arch_rpt1"/>
    <property type="match status" value="1"/>
</dbReference>
<dbReference type="CDD" id="cd02410">
    <property type="entry name" value="KH-II_CPSF_arch_rpt2"/>
    <property type="match status" value="1"/>
</dbReference>
<dbReference type="Gene3D" id="3.30.300.20">
    <property type="match status" value="1"/>
</dbReference>
<dbReference type="Gene3D" id="3.30.300.230">
    <property type="match status" value="1"/>
</dbReference>
<dbReference type="Gene3D" id="3.40.50.10890">
    <property type="match status" value="1"/>
</dbReference>
<dbReference type="Gene3D" id="3.60.15.10">
    <property type="entry name" value="Ribonuclease Z/Hydroxyacylglutathione hydrolase-like"/>
    <property type="match status" value="1"/>
</dbReference>
<dbReference type="HAMAP" id="MF_00870">
    <property type="entry name" value="FttA"/>
    <property type="match status" value="1"/>
</dbReference>
<dbReference type="InterPro" id="IPR019975">
    <property type="entry name" value="aCPSF1"/>
</dbReference>
<dbReference type="InterPro" id="IPR022712">
    <property type="entry name" value="Beta_Casp"/>
</dbReference>
<dbReference type="InterPro" id="IPR004087">
    <property type="entry name" value="KH_dom"/>
</dbReference>
<dbReference type="InterPro" id="IPR015946">
    <property type="entry name" value="KH_dom-like_a/b"/>
</dbReference>
<dbReference type="InterPro" id="IPR009019">
    <property type="entry name" value="KH_sf_prok-type"/>
</dbReference>
<dbReference type="InterPro" id="IPR050698">
    <property type="entry name" value="MBL"/>
</dbReference>
<dbReference type="InterPro" id="IPR001279">
    <property type="entry name" value="Metallo-B-lactamas"/>
</dbReference>
<dbReference type="InterPro" id="IPR036866">
    <property type="entry name" value="RibonucZ/Hydroxyglut_hydro"/>
</dbReference>
<dbReference type="InterPro" id="IPR011108">
    <property type="entry name" value="RMMBL"/>
</dbReference>
<dbReference type="InterPro" id="IPR033769">
    <property type="entry name" value="TffA_KH"/>
</dbReference>
<dbReference type="NCBIfam" id="TIGR03675">
    <property type="entry name" value="arCOG00543"/>
    <property type="match status" value="1"/>
</dbReference>
<dbReference type="PANTHER" id="PTHR11203:SF51">
    <property type="entry name" value="CLEAVAGE AND POLYADENYLATION SPECIFICITY FACTOR"/>
    <property type="match status" value="1"/>
</dbReference>
<dbReference type="PANTHER" id="PTHR11203">
    <property type="entry name" value="CLEAVAGE AND POLYADENYLATION SPECIFICITY FACTOR FAMILY MEMBER"/>
    <property type="match status" value="1"/>
</dbReference>
<dbReference type="Pfam" id="PF10996">
    <property type="entry name" value="Beta-Casp"/>
    <property type="match status" value="1"/>
</dbReference>
<dbReference type="Pfam" id="PF17214">
    <property type="entry name" value="KH_TffA"/>
    <property type="match status" value="1"/>
</dbReference>
<dbReference type="Pfam" id="PF16661">
    <property type="entry name" value="Lactamase_B_6"/>
    <property type="match status" value="1"/>
</dbReference>
<dbReference type="Pfam" id="PF07521">
    <property type="entry name" value="RMMBL"/>
    <property type="match status" value="1"/>
</dbReference>
<dbReference type="SMART" id="SM01027">
    <property type="entry name" value="Beta-Casp"/>
    <property type="match status" value="1"/>
</dbReference>
<dbReference type="SMART" id="SM00322">
    <property type="entry name" value="KH"/>
    <property type="match status" value="1"/>
</dbReference>
<dbReference type="SMART" id="SM00849">
    <property type="entry name" value="Lactamase_B"/>
    <property type="match status" value="1"/>
</dbReference>
<dbReference type="SUPFAM" id="SSF56281">
    <property type="entry name" value="Metallo-hydrolase/oxidoreductase"/>
    <property type="match status" value="1"/>
</dbReference>
<dbReference type="SUPFAM" id="SSF54814">
    <property type="entry name" value="Prokaryotic type KH domain (KH-domain type II)"/>
    <property type="match status" value="1"/>
</dbReference>
<gene>
    <name evidence="1" type="primary">fttA</name>
    <name evidence="6" type="ordered locus">PH1404</name>
</gene>
<keyword id="KW-0002">3D-structure</keyword>
<keyword id="KW-0238">DNA-binding</keyword>
<keyword id="KW-0255">Endonuclease</keyword>
<keyword id="KW-0269">Exonuclease</keyword>
<keyword id="KW-0378">Hydrolase</keyword>
<keyword id="KW-0479">Metal-binding</keyword>
<keyword id="KW-0540">Nuclease</keyword>
<keyword id="KW-0694">RNA-binding</keyword>
<keyword id="KW-0804">Transcription</keyword>
<keyword id="KW-0805">Transcription regulation</keyword>
<keyword id="KW-0806">Transcription termination</keyword>
<keyword id="KW-0862">Zinc</keyword>
<sequence>MTFLIKRETQVDQILRDIRAVVNQMVPKEAKITEIEFEGPELVIYVKNPEAIMKDGELIKDLAKVLKKRISVRPDPEVLLPPEEAEKLIFEIVPKEAEITNIAFDPSVGEVLIEAKKPGLVIGKNGETLRLITQKVKWAPKVVRTPPLQSQTIYSIRQILQTESKDRRKFLRQVGRNIYRKPEYKSRWIRITGLGGFREVGRSALLVQTDESFVLVDFGVNVAMLNDPYKAFPHFDAPEFQYVLREGLLDAIIITHAHLDHCGMLPYLFRYNLFDGPIYTTPPTRDLMVLLQKDFIEIQQSNGQDPLYRPRDIKEVIKHTITLDYGEVRDISPDIRLTLHNAGHILGSAIVHLHIGNGLHNIAITGDFKFIPTRLLEPANAKFPRLETLVMESTYGGANDIQMPREEAEKRLIEVIHNTIKRGGKVLIPAMAVGRAQEVMMVLEEYARIGGIEVPIYLDGMIWEATAIHTAYPEYLSRRLREQIFKEGYNPFLSEIFHPVANSRERQDIIDSNEPAIIIASSGMLVGGPSVEYFKQLAPDPKNSIIFVSYQAEGTLGRQVQSGIREIPMVGEEGRTEVIKVNMEVHTIDGFSGHADRRELMNYVAKVRPRPERIITVHGEPQKCLDLATSIHRKFGISTRAPNNLDTIRLR</sequence>
<accession>O50112</accession>